<name>PIN1_MALDO</name>
<evidence type="ECO:0000255" key="1">
    <source>
        <dbReference type="PROSITE-ProRule" id="PRU00278"/>
    </source>
</evidence>
<evidence type="ECO:0000256" key="2">
    <source>
        <dbReference type="SAM" id="MobiDB-lite"/>
    </source>
</evidence>
<evidence type="ECO:0000305" key="3"/>
<sequence length="121" mass="13220">MSSSAGNQVRASHILIKHQGSRRKASWKDPEGQIIRNTTRDSAVSQLKALRDDILSGKAKFDDLAARYSDCSSAKRGGDLGPFGRNQMQKPFEEATFALKVGEMSDIVDTDSGVHIIKRTG</sequence>
<dbReference type="EC" id="5.2.1.8"/>
<dbReference type="EMBL" id="AF290200">
    <property type="protein sequence ID" value="AAK83088.1"/>
    <property type="molecule type" value="mRNA"/>
</dbReference>
<dbReference type="SMR" id="Q94G00"/>
<dbReference type="GO" id="GO:0005829">
    <property type="term" value="C:cytosol"/>
    <property type="evidence" value="ECO:0007669"/>
    <property type="project" value="TreeGrafter"/>
</dbReference>
<dbReference type="GO" id="GO:0005634">
    <property type="term" value="C:nucleus"/>
    <property type="evidence" value="ECO:0007669"/>
    <property type="project" value="TreeGrafter"/>
</dbReference>
<dbReference type="GO" id="GO:0003755">
    <property type="term" value="F:peptidyl-prolyl cis-trans isomerase activity"/>
    <property type="evidence" value="ECO:0007669"/>
    <property type="project" value="UniProtKB-KW"/>
</dbReference>
<dbReference type="FunFam" id="3.10.50.40:FF:000010">
    <property type="entry name" value="Peptidyl-prolyl cis-trans isomerase Pin1"/>
    <property type="match status" value="1"/>
</dbReference>
<dbReference type="Gene3D" id="3.10.50.40">
    <property type="match status" value="1"/>
</dbReference>
<dbReference type="InterPro" id="IPR046357">
    <property type="entry name" value="PPIase_dom_sf"/>
</dbReference>
<dbReference type="InterPro" id="IPR051370">
    <property type="entry name" value="PPIase_Pin1"/>
</dbReference>
<dbReference type="InterPro" id="IPR000297">
    <property type="entry name" value="PPIase_PpiC"/>
</dbReference>
<dbReference type="InterPro" id="IPR023058">
    <property type="entry name" value="PPIase_PpiC_CS"/>
</dbReference>
<dbReference type="PANTHER" id="PTHR10657">
    <property type="entry name" value="PEPTIDYL-PROLYL CIS-TRANS ISOMERASE"/>
    <property type="match status" value="1"/>
</dbReference>
<dbReference type="PANTHER" id="PTHR10657:SF41">
    <property type="entry name" value="PEPTIDYL-PROLYL CIS-TRANS ISOMERASE PIN1"/>
    <property type="match status" value="1"/>
</dbReference>
<dbReference type="Pfam" id="PF00639">
    <property type="entry name" value="Rotamase"/>
    <property type="match status" value="1"/>
</dbReference>
<dbReference type="SUPFAM" id="SSF54534">
    <property type="entry name" value="FKBP-like"/>
    <property type="match status" value="1"/>
</dbReference>
<dbReference type="PROSITE" id="PS01096">
    <property type="entry name" value="PPIC_PPIASE_1"/>
    <property type="match status" value="1"/>
</dbReference>
<dbReference type="PROSITE" id="PS50198">
    <property type="entry name" value="PPIC_PPIASE_2"/>
    <property type="match status" value="1"/>
</dbReference>
<reference key="1">
    <citation type="journal article" date="2001" name="J. Biol. Chem.">
        <title>Functional conservation of phosphorylation-specific prolyl isomerases in plants.</title>
        <authorList>
            <person name="Yao J.-L."/>
            <person name="Kops O."/>
            <person name="Lu P.-J."/>
            <person name="Lu K.P."/>
        </authorList>
    </citation>
    <scope>NUCLEOTIDE SEQUENCE [MRNA]</scope>
    <source>
        <strain>cv. Granny Smith</strain>
    </source>
</reference>
<comment type="function">
    <text>Prolyl cis/trans isomerase with specificity for phospho-Ser-Pro bonds.</text>
</comment>
<comment type="catalytic activity">
    <reaction>
        <text>[protein]-peptidylproline (omega=180) = [protein]-peptidylproline (omega=0)</text>
        <dbReference type="Rhea" id="RHEA:16237"/>
        <dbReference type="Rhea" id="RHEA-COMP:10747"/>
        <dbReference type="Rhea" id="RHEA-COMP:10748"/>
        <dbReference type="ChEBI" id="CHEBI:83833"/>
        <dbReference type="ChEBI" id="CHEBI:83834"/>
        <dbReference type="EC" id="5.2.1.8"/>
    </reaction>
</comment>
<comment type="activity regulation">
    <text>Inhibited in vitro by juglone.</text>
</comment>
<comment type="developmental stage">
    <text>Expressed in 1 to 3 week-old fruit but not in mature fruit. Expression is tightly associated with cell division.</text>
</comment>
<comment type="miscellaneous">
    <text>Like all plant Pin1-type PPIases, do not contain the N-terminal WW domain found in other eukaryotic parvulins, but contains a four-amino acid insertion next to the phospho-specific recognition site of the active site. These extra amino acids may be important for mediating the substrate interaction of plant enzymes.</text>
</comment>
<comment type="similarity">
    <text evidence="3">Belongs to the PpiC/parvulin rotamase family.</text>
</comment>
<gene>
    <name type="primary">PIN1</name>
</gene>
<proteinExistence type="evidence at transcript level"/>
<feature type="chain" id="PRO_0000193442" description="Peptidyl-prolyl cis-trans isomerase Pin1">
    <location>
        <begin position="1"/>
        <end position="121"/>
    </location>
</feature>
<feature type="domain" description="PpiC" evidence="1">
    <location>
        <begin position="6"/>
        <end position="121"/>
    </location>
</feature>
<feature type="region of interest" description="Disordered" evidence="2">
    <location>
        <begin position="1"/>
        <end position="32"/>
    </location>
</feature>
<feature type="compositionally biased region" description="Polar residues" evidence="2">
    <location>
        <begin position="1"/>
        <end position="10"/>
    </location>
</feature>
<feature type="compositionally biased region" description="Basic residues" evidence="2">
    <location>
        <begin position="15"/>
        <end position="25"/>
    </location>
</feature>
<keyword id="KW-0413">Isomerase</keyword>
<keyword id="KW-0697">Rotamase</keyword>
<organism>
    <name type="scientific">Malus domestica</name>
    <name type="common">Apple</name>
    <name type="synonym">Pyrus malus</name>
    <dbReference type="NCBI Taxonomy" id="3750"/>
    <lineage>
        <taxon>Eukaryota</taxon>
        <taxon>Viridiplantae</taxon>
        <taxon>Streptophyta</taxon>
        <taxon>Embryophyta</taxon>
        <taxon>Tracheophyta</taxon>
        <taxon>Spermatophyta</taxon>
        <taxon>Magnoliopsida</taxon>
        <taxon>eudicotyledons</taxon>
        <taxon>Gunneridae</taxon>
        <taxon>Pentapetalae</taxon>
        <taxon>rosids</taxon>
        <taxon>fabids</taxon>
        <taxon>Rosales</taxon>
        <taxon>Rosaceae</taxon>
        <taxon>Amygdaloideae</taxon>
        <taxon>Maleae</taxon>
        <taxon>Malus</taxon>
    </lineage>
</organism>
<protein>
    <recommendedName>
        <fullName>Peptidyl-prolyl cis-trans isomerase Pin1</fullName>
        <shortName>PPIase Pin1</shortName>
        <ecNumber>5.2.1.8</ecNumber>
    </recommendedName>
    <alternativeName>
        <fullName>MdPin1</fullName>
    </alternativeName>
    <alternativeName>
        <fullName>Rotamase Pin1</fullName>
    </alternativeName>
</protein>
<accession>Q94G00</accession>